<comment type="subcellular location">
    <subcellularLocation>
        <location evidence="1">Cytoplasm</location>
    </subcellularLocation>
</comment>
<comment type="similarity">
    <text evidence="1">Belongs to the TACO1 family.</text>
</comment>
<protein>
    <recommendedName>
        <fullName evidence="1">Probable transcriptional regulatory protein Csal_0810</fullName>
    </recommendedName>
</protein>
<organism>
    <name type="scientific">Chromohalobacter salexigens (strain ATCC BAA-138 / DSM 3043 / CIP 106854 / NCIMB 13768 / 1H11)</name>
    <dbReference type="NCBI Taxonomy" id="290398"/>
    <lineage>
        <taxon>Bacteria</taxon>
        <taxon>Pseudomonadati</taxon>
        <taxon>Pseudomonadota</taxon>
        <taxon>Gammaproteobacteria</taxon>
        <taxon>Oceanospirillales</taxon>
        <taxon>Halomonadaceae</taxon>
        <taxon>Chromohalobacter</taxon>
    </lineage>
</organism>
<feature type="chain" id="PRO_0000257047" description="Probable transcriptional regulatory protein Csal_0810">
    <location>
        <begin position="1"/>
        <end position="240"/>
    </location>
</feature>
<dbReference type="EMBL" id="CP000285">
    <property type="protein sequence ID" value="ABE58167.1"/>
    <property type="molecule type" value="Genomic_DNA"/>
</dbReference>
<dbReference type="RefSeq" id="WP_011506113.1">
    <property type="nucleotide sequence ID" value="NC_007963.1"/>
</dbReference>
<dbReference type="SMR" id="Q1QZE1"/>
<dbReference type="STRING" id="290398.Csal_0810"/>
<dbReference type="GeneID" id="95333556"/>
<dbReference type="KEGG" id="csa:Csal_0810"/>
<dbReference type="eggNOG" id="COG0217">
    <property type="taxonomic scope" value="Bacteria"/>
</dbReference>
<dbReference type="HOGENOM" id="CLU_062974_2_0_6"/>
<dbReference type="OrthoDB" id="9781053at2"/>
<dbReference type="Proteomes" id="UP000000239">
    <property type="component" value="Chromosome"/>
</dbReference>
<dbReference type="GO" id="GO:0005829">
    <property type="term" value="C:cytosol"/>
    <property type="evidence" value="ECO:0007669"/>
    <property type="project" value="TreeGrafter"/>
</dbReference>
<dbReference type="GO" id="GO:0003677">
    <property type="term" value="F:DNA binding"/>
    <property type="evidence" value="ECO:0007669"/>
    <property type="project" value="UniProtKB-UniRule"/>
</dbReference>
<dbReference type="GO" id="GO:0006355">
    <property type="term" value="P:regulation of DNA-templated transcription"/>
    <property type="evidence" value="ECO:0007669"/>
    <property type="project" value="UniProtKB-UniRule"/>
</dbReference>
<dbReference type="FunFam" id="1.10.10.200:FF:000003">
    <property type="entry name" value="Probable transcriptional regulatory protein YeeN"/>
    <property type="match status" value="1"/>
</dbReference>
<dbReference type="Gene3D" id="1.10.10.200">
    <property type="match status" value="1"/>
</dbReference>
<dbReference type="Gene3D" id="3.30.70.980">
    <property type="match status" value="2"/>
</dbReference>
<dbReference type="HAMAP" id="MF_00693">
    <property type="entry name" value="Transcrip_reg_TACO1"/>
    <property type="match status" value="1"/>
</dbReference>
<dbReference type="InterPro" id="IPR017856">
    <property type="entry name" value="Integrase-like_N"/>
</dbReference>
<dbReference type="InterPro" id="IPR048300">
    <property type="entry name" value="TACO1_YebC-like_2nd/3rd_dom"/>
</dbReference>
<dbReference type="InterPro" id="IPR049083">
    <property type="entry name" value="TACO1_YebC_N"/>
</dbReference>
<dbReference type="InterPro" id="IPR002876">
    <property type="entry name" value="Transcrip_reg_TACO1-like"/>
</dbReference>
<dbReference type="InterPro" id="IPR026564">
    <property type="entry name" value="Transcrip_reg_TACO1-like_dom3"/>
</dbReference>
<dbReference type="InterPro" id="IPR029072">
    <property type="entry name" value="YebC-like"/>
</dbReference>
<dbReference type="NCBIfam" id="NF009044">
    <property type="entry name" value="PRK12378.1"/>
    <property type="match status" value="1"/>
</dbReference>
<dbReference type="PANTHER" id="PTHR12532">
    <property type="entry name" value="TRANSLATIONAL ACTIVATOR OF CYTOCHROME C OXIDASE 1"/>
    <property type="match status" value="1"/>
</dbReference>
<dbReference type="PANTHER" id="PTHR12532:SF0">
    <property type="entry name" value="TRANSLATIONAL ACTIVATOR OF CYTOCHROME C OXIDASE 1"/>
    <property type="match status" value="1"/>
</dbReference>
<dbReference type="Pfam" id="PF20772">
    <property type="entry name" value="TACO1_YebC_N"/>
    <property type="match status" value="1"/>
</dbReference>
<dbReference type="Pfam" id="PF01709">
    <property type="entry name" value="Transcrip_reg"/>
    <property type="match status" value="1"/>
</dbReference>
<dbReference type="SUPFAM" id="SSF75625">
    <property type="entry name" value="YebC-like"/>
    <property type="match status" value="1"/>
</dbReference>
<gene>
    <name type="ordered locus">Csal_0810</name>
</gene>
<accession>Q1QZE1</accession>
<reference key="1">
    <citation type="journal article" date="2011" name="Stand. Genomic Sci.">
        <title>Complete genome sequence of the halophilic and highly halotolerant Chromohalobacter salexigens type strain (1H11(T)).</title>
        <authorList>
            <person name="Copeland A."/>
            <person name="O'Connor K."/>
            <person name="Lucas S."/>
            <person name="Lapidus A."/>
            <person name="Berry K.W."/>
            <person name="Detter J.C."/>
            <person name="Del Rio T.G."/>
            <person name="Hammon N."/>
            <person name="Dalin E."/>
            <person name="Tice H."/>
            <person name="Pitluck S."/>
            <person name="Bruce D."/>
            <person name="Goodwin L."/>
            <person name="Han C."/>
            <person name="Tapia R."/>
            <person name="Saunders E."/>
            <person name="Schmutz J."/>
            <person name="Brettin T."/>
            <person name="Larimer F."/>
            <person name="Land M."/>
            <person name="Hauser L."/>
            <person name="Vargas C."/>
            <person name="Nieto J.J."/>
            <person name="Kyrpides N.C."/>
            <person name="Ivanova N."/>
            <person name="Goker M."/>
            <person name="Klenk H.P."/>
            <person name="Csonka L.N."/>
            <person name="Woyke T."/>
        </authorList>
    </citation>
    <scope>NUCLEOTIDE SEQUENCE [LARGE SCALE GENOMIC DNA]</scope>
    <source>
        <strain>ATCC BAA-138 / DSM 3043 / CIP 106854 / NCIMB 13768 / 1H11</strain>
    </source>
</reference>
<proteinExistence type="inferred from homology"/>
<keyword id="KW-0963">Cytoplasm</keyword>
<keyword id="KW-0238">DNA-binding</keyword>
<keyword id="KW-1185">Reference proteome</keyword>
<keyword id="KW-0804">Transcription</keyword>
<keyword id="KW-0805">Transcription regulation</keyword>
<sequence>MGRAFQNRKESMAKTADAKTKVYSKYGREIYVCAKSGGVDPAGNLALRGLIDRAKKDQVPSHVIDKALDKASGVGGEDYELARYEGFGPGSCMVIVECLTDNPNRTFGDVRACFNKAKSKLGTPGSVSHMFDHCAILAFAGSDEEAVLEALMEADVDVTDIENEAGRITVFAPHTEYAKTKQALADAFGELDFEVDEIQFLAQTMTPVAGDDVAMFDKLLVTLNDLDDVQNIYHNAELQG</sequence>
<name>Y810_CHRSD</name>
<evidence type="ECO:0000255" key="1">
    <source>
        <dbReference type="HAMAP-Rule" id="MF_00693"/>
    </source>
</evidence>